<organism>
    <name type="scientific">Homo sapiens</name>
    <name type="common">Human</name>
    <dbReference type="NCBI Taxonomy" id="9606"/>
    <lineage>
        <taxon>Eukaryota</taxon>
        <taxon>Metazoa</taxon>
        <taxon>Chordata</taxon>
        <taxon>Craniata</taxon>
        <taxon>Vertebrata</taxon>
        <taxon>Euteleostomi</taxon>
        <taxon>Mammalia</taxon>
        <taxon>Eutheria</taxon>
        <taxon>Euarchontoglires</taxon>
        <taxon>Primates</taxon>
        <taxon>Haplorrhini</taxon>
        <taxon>Catarrhini</taxon>
        <taxon>Hominidae</taxon>
        <taxon>Homo</taxon>
    </lineage>
</organism>
<keyword id="KW-0002">3D-structure</keyword>
<keyword id="KW-0025">Alternative splicing</keyword>
<keyword id="KW-0067">ATP-binding</keyword>
<keyword id="KW-0963">Cytoplasm</keyword>
<keyword id="KW-0418">Kinase</keyword>
<keyword id="KW-0547">Nucleotide-binding</keyword>
<keyword id="KW-0539">Nucleus</keyword>
<keyword id="KW-1267">Proteomics identification</keyword>
<keyword id="KW-1185">Reference proteome</keyword>
<keyword id="KW-0723">Serine/threonine-protein kinase</keyword>
<keyword id="KW-0808">Transferase</keyword>
<sequence>MKRRASDRGAGETSARAKALGSGISGNNAKRAGPFILGPRLGNSPVPSIVQCLARKDGTDDFYQLKILTLEERGDQGIESQEERQGKMLLHTEYSLLSLLHTQDGVVHHHGLFQDRTCEIVEDTESSRMVKKMKKRICLVLDCLCAHDFSDKTADLINLQHYVIKEKRLSERETVVIFYDVVRVVEALHQKNIVHRDLKLGNMVLNKRTHRITITNFCLGKHLVSEGDLLKDQRGSPAYISPDVLSGRPYRGKPSDMWALGVVLFTMLYGQFPFYDSIPQELFRKIKAAEYTIPEDGRVSENTVCLIRKLLVLDPQQRLAAADVLEALSAIIASWQSLSSLSGPLQVVPDIDDQMSNADSSQEAKVTEECSQYEFENYMRQQLLLAEEKSSIHDARSWVPKRQFGSAPPVRRLGHDAQPMTSLDTAILAQRYLRK</sequence>
<accession>Q8N2I9</accession>
<accession>D3DPS8</accession>
<accession>Q5VTK8</accession>
<accession>Q5VTK9</accession>
<accession>Q6ZMN1</accession>
<accession>Q8N2J8</accession>
<accession>Q8N3I6</accession>
<accession>Q96HN6</accession>
<accession>Q96I44</accession>
<accession>Q9BSA3</accession>
<accession>Q9H7H6</accession>
<reference key="1">
    <citation type="submission" date="2002-12" db="EMBL/GenBank/DDBJ databases">
        <title>Cloning and characterization of a novel Ser/Thr-like kinase.</title>
        <authorList>
            <person name="Shan Y.X."/>
            <person name="Wu H."/>
            <person name="Yu L."/>
        </authorList>
    </citation>
    <scope>NUCLEOTIDE SEQUENCE [MRNA] (ISOFORM 1)</scope>
    <source>
        <tissue>Brain</tissue>
    </source>
</reference>
<reference key="2">
    <citation type="journal article" date="2004" name="Nat. Genet.">
        <title>Complete sequencing and characterization of 21,243 full-length human cDNAs.</title>
        <authorList>
            <person name="Ota T."/>
            <person name="Suzuki Y."/>
            <person name="Nishikawa T."/>
            <person name="Otsuki T."/>
            <person name="Sugiyama T."/>
            <person name="Irie R."/>
            <person name="Wakamatsu A."/>
            <person name="Hayashi K."/>
            <person name="Sato H."/>
            <person name="Nagai K."/>
            <person name="Kimura K."/>
            <person name="Makita H."/>
            <person name="Sekine M."/>
            <person name="Obayashi M."/>
            <person name="Nishi T."/>
            <person name="Shibahara T."/>
            <person name="Tanaka T."/>
            <person name="Ishii S."/>
            <person name="Yamamoto J."/>
            <person name="Saito K."/>
            <person name="Kawai Y."/>
            <person name="Isono Y."/>
            <person name="Nakamura Y."/>
            <person name="Nagahari K."/>
            <person name="Murakami K."/>
            <person name="Yasuda T."/>
            <person name="Iwayanagi T."/>
            <person name="Wagatsuma M."/>
            <person name="Shiratori A."/>
            <person name="Sudo H."/>
            <person name="Hosoiri T."/>
            <person name="Kaku Y."/>
            <person name="Kodaira H."/>
            <person name="Kondo H."/>
            <person name="Sugawara M."/>
            <person name="Takahashi M."/>
            <person name="Kanda K."/>
            <person name="Yokoi T."/>
            <person name="Furuya T."/>
            <person name="Kikkawa E."/>
            <person name="Omura Y."/>
            <person name="Abe K."/>
            <person name="Kamihara K."/>
            <person name="Katsuta N."/>
            <person name="Sato K."/>
            <person name="Tanikawa M."/>
            <person name="Yamazaki M."/>
            <person name="Ninomiya K."/>
            <person name="Ishibashi T."/>
            <person name="Yamashita H."/>
            <person name="Murakawa K."/>
            <person name="Fujimori K."/>
            <person name="Tanai H."/>
            <person name="Kimata M."/>
            <person name="Watanabe M."/>
            <person name="Hiraoka S."/>
            <person name="Chiba Y."/>
            <person name="Ishida S."/>
            <person name="Ono Y."/>
            <person name="Takiguchi S."/>
            <person name="Watanabe S."/>
            <person name="Yosida M."/>
            <person name="Hotuta T."/>
            <person name="Kusano J."/>
            <person name="Kanehori K."/>
            <person name="Takahashi-Fujii A."/>
            <person name="Hara H."/>
            <person name="Tanase T.-O."/>
            <person name="Nomura Y."/>
            <person name="Togiya S."/>
            <person name="Komai F."/>
            <person name="Hara R."/>
            <person name="Takeuchi K."/>
            <person name="Arita M."/>
            <person name="Imose N."/>
            <person name="Musashino K."/>
            <person name="Yuuki H."/>
            <person name="Oshima A."/>
            <person name="Sasaki N."/>
            <person name="Aotsuka S."/>
            <person name="Yoshikawa Y."/>
            <person name="Matsunawa H."/>
            <person name="Ichihara T."/>
            <person name="Shiohata N."/>
            <person name="Sano S."/>
            <person name="Moriya S."/>
            <person name="Momiyama H."/>
            <person name="Satoh N."/>
            <person name="Takami S."/>
            <person name="Terashima Y."/>
            <person name="Suzuki O."/>
            <person name="Nakagawa S."/>
            <person name="Senoh A."/>
            <person name="Mizoguchi H."/>
            <person name="Goto Y."/>
            <person name="Shimizu F."/>
            <person name="Wakebe H."/>
            <person name="Hishigaki H."/>
            <person name="Watanabe T."/>
            <person name="Sugiyama A."/>
            <person name="Takemoto M."/>
            <person name="Kawakami B."/>
            <person name="Yamazaki M."/>
            <person name="Watanabe K."/>
            <person name="Kumagai A."/>
            <person name="Itakura S."/>
            <person name="Fukuzumi Y."/>
            <person name="Fujimori Y."/>
            <person name="Komiyama M."/>
            <person name="Tashiro H."/>
            <person name="Tanigami A."/>
            <person name="Fujiwara T."/>
            <person name="Ono T."/>
            <person name="Yamada K."/>
            <person name="Fujii Y."/>
            <person name="Ozaki K."/>
            <person name="Hirao M."/>
            <person name="Ohmori Y."/>
            <person name="Kawabata A."/>
            <person name="Hikiji T."/>
            <person name="Kobatake N."/>
            <person name="Inagaki H."/>
            <person name="Ikema Y."/>
            <person name="Okamoto S."/>
            <person name="Okitani R."/>
            <person name="Kawakami T."/>
            <person name="Noguchi S."/>
            <person name="Itoh T."/>
            <person name="Shigeta K."/>
            <person name="Senba T."/>
            <person name="Matsumura K."/>
            <person name="Nakajima Y."/>
            <person name="Mizuno T."/>
            <person name="Morinaga M."/>
            <person name="Sasaki M."/>
            <person name="Togashi T."/>
            <person name="Oyama M."/>
            <person name="Hata H."/>
            <person name="Watanabe M."/>
            <person name="Komatsu T."/>
            <person name="Mizushima-Sugano J."/>
            <person name="Satoh T."/>
            <person name="Shirai Y."/>
            <person name="Takahashi Y."/>
            <person name="Nakagawa K."/>
            <person name="Okumura K."/>
            <person name="Nagase T."/>
            <person name="Nomura N."/>
            <person name="Kikuchi H."/>
            <person name="Masuho Y."/>
            <person name="Yamashita R."/>
            <person name="Nakai K."/>
            <person name="Yada T."/>
            <person name="Nakamura Y."/>
            <person name="Ohara O."/>
            <person name="Isogai T."/>
            <person name="Sugano S."/>
        </authorList>
    </citation>
    <scope>NUCLEOTIDE SEQUENCE [LARGE SCALE MRNA] (ISOFORMS 1; 2 AND 3)</scope>
    <scope>VARIANT THR-395</scope>
    <source>
        <tissue>Ovary</tissue>
        <tissue>Spleen</tissue>
        <tissue>Testis</tissue>
    </source>
</reference>
<reference key="3">
    <citation type="journal article" date="2007" name="BMC Genomics">
        <title>The full-ORF clone resource of the German cDNA consortium.</title>
        <authorList>
            <person name="Bechtel S."/>
            <person name="Rosenfelder H."/>
            <person name="Duda A."/>
            <person name="Schmidt C.P."/>
            <person name="Ernst U."/>
            <person name="Wellenreuther R."/>
            <person name="Mehrle A."/>
            <person name="Schuster C."/>
            <person name="Bahr A."/>
            <person name="Bloecker H."/>
            <person name="Heubner D."/>
            <person name="Hoerlein A."/>
            <person name="Michel G."/>
            <person name="Wedler H."/>
            <person name="Koehrer K."/>
            <person name="Ottenwaelder B."/>
            <person name="Poustka A."/>
            <person name="Wiemann S."/>
            <person name="Schupp I."/>
        </authorList>
    </citation>
    <scope>NUCLEOTIDE SEQUENCE [LARGE SCALE MRNA] (ISOFORM 1)</scope>
    <source>
        <tissue>Melanoma</tissue>
    </source>
</reference>
<reference key="4">
    <citation type="journal article" date="2006" name="Nature">
        <title>The DNA sequence and biological annotation of human chromosome 1.</title>
        <authorList>
            <person name="Gregory S.G."/>
            <person name="Barlow K.F."/>
            <person name="McLay K.E."/>
            <person name="Kaul R."/>
            <person name="Swarbreck D."/>
            <person name="Dunham A."/>
            <person name="Scott C.E."/>
            <person name="Howe K.L."/>
            <person name="Woodfine K."/>
            <person name="Spencer C.C.A."/>
            <person name="Jones M.C."/>
            <person name="Gillson C."/>
            <person name="Searle S."/>
            <person name="Zhou Y."/>
            <person name="Kokocinski F."/>
            <person name="McDonald L."/>
            <person name="Evans R."/>
            <person name="Phillips K."/>
            <person name="Atkinson A."/>
            <person name="Cooper R."/>
            <person name="Jones C."/>
            <person name="Hall R.E."/>
            <person name="Andrews T.D."/>
            <person name="Lloyd C."/>
            <person name="Ainscough R."/>
            <person name="Almeida J.P."/>
            <person name="Ambrose K.D."/>
            <person name="Anderson F."/>
            <person name="Andrew R.W."/>
            <person name="Ashwell R.I.S."/>
            <person name="Aubin K."/>
            <person name="Babbage A.K."/>
            <person name="Bagguley C.L."/>
            <person name="Bailey J."/>
            <person name="Beasley H."/>
            <person name="Bethel G."/>
            <person name="Bird C.P."/>
            <person name="Bray-Allen S."/>
            <person name="Brown J.Y."/>
            <person name="Brown A.J."/>
            <person name="Buckley D."/>
            <person name="Burton J."/>
            <person name="Bye J."/>
            <person name="Carder C."/>
            <person name="Chapman J.C."/>
            <person name="Clark S.Y."/>
            <person name="Clarke G."/>
            <person name="Clee C."/>
            <person name="Cobley V."/>
            <person name="Collier R.E."/>
            <person name="Corby N."/>
            <person name="Coville G.J."/>
            <person name="Davies J."/>
            <person name="Deadman R."/>
            <person name="Dunn M."/>
            <person name="Earthrowl M."/>
            <person name="Ellington A.G."/>
            <person name="Errington H."/>
            <person name="Frankish A."/>
            <person name="Frankland J."/>
            <person name="French L."/>
            <person name="Garner P."/>
            <person name="Garnett J."/>
            <person name="Gay L."/>
            <person name="Ghori M.R.J."/>
            <person name="Gibson R."/>
            <person name="Gilby L.M."/>
            <person name="Gillett W."/>
            <person name="Glithero R.J."/>
            <person name="Grafham D.V."/>
            <person name="Griffiths C."/>
            <person name="Griffiths-Jones S."/>
            <person name="Grocock R."/>
            <person name="Hammond S."/>
            <person name="Harrison E.S.I."/>
            <person name="Hart E."/>
            <person name="Haugen E."/>
            <person name="Heath P.D."/>
            <person name="Holmes S."/>
            <person name="Holt K."/>
            <person name="Howden P.J."/>
            <person name="Hunt A.R."/>
            <person name="Hunt S.E."/>
            <person name="Hunter G."/>
            <person name="Isherwood J."/>
            <person name="James R."/>
            <person name="Johnson C."/>
            <person name="Johnson D."/>
            <person name="Joy A."/>
            <person name="Kay M."/>
            <person name="Kershaw J.K."/>
            <person name="Kibukawa M."/>
            <person name="Kimberley A.M."/>
            <person name="King A."/>
            <person name="Knights A.J."/>
            <person name="Lad H."/>
            <person name="Laird G."/>
            <person name="Lawlor S."/>
            <person name="Leongamornlert D.A."/>
            <person name="Lloyd D.M."/>
            <person name="Loveland J."/>
            <person name="Lovell J."/>
            <person name="Lush M.J."/>
            <person name="Lyne R."/>
            <person name="Martin S."/>
            <person name="Mashreghi-Mohammadi M."/>
            <person name="Matthews L."/>
            <person name="Matthews N.S.W."/>
            <person name="McLaren S."/>
            <person name="Milne S."/>
            <person name="Mistry S."/>
            <person name="Moore M.J.F."/>
            <person name="Nickerson T."/>
            <person name="O'Dell C.N."/>
            <person name="Oliver K."/>
            <person name="Palmeiri A."/>
            <person name="Palmer S.A."/>
            <person name="Parker A."/>
            <person name="Patel D."/>
            <person name="Pearce A.V."/>
            <person name="Peck A.I."/>
            <person name="Pelan S."/>
            <person name="Phelps K."/>
            <person name="Phillimore B.J."/>
            <person name="Plumb R."/>
            <person name="Rajan J."/>
            <person name="Raymond C."/>
            <person name="Rouse G."/>
            <person name="Saenphimmachak C."/>
            <person name="Sehra H.K."/>
            <person name="Sheridan E."/>
            <person name="Shownkeen R."/>
            <person name="Sims S."/>
            <person name="Skuce C.D."/>
            <person name="Smith M."/>
            <person name="Steward C."/>
            <person name="Subramanian S."/>
            <person name="Sycamore N."/>
            <person name="Tracey A."/>
            <person name="Tromans A."/>
            <person name="Van Helmond Z."/>
            <person name="Wall M."/>
            <person name="Wallis J.M."/>
            <person name="White S."/>
            <person name="Whitehead S.L."/>
            <person name="Wilkinson J.E."/>
            <person name="Willey D.L."/>
            <person name="Williams H."/>
            <person name="Wilming L."/>
            <person name="Wray P.W."/>
            <person name="Wu Z."/>
            <person name="Coulson A."/>
            <person name="Vaudin M."/>
            <person name="Sulston J.E."/>
            <person name="Durbin R.M."/>
            <person name="Hubbard T."/>
            <person name="Wooster R."/>
            <person name="Dunham I."/>
            <person name="Carter N.P."/>
            <person name="McVean G."/>
            <person name="Ross M.T."/>
            <person name="Harrow J."/>
            <person name="Olson M.V."/>
            <person name="Beck S."/>
            <person name="Rogers J."/>
            <person name="Bentley D.R."/>
        </authorList>
    </citation>
    <scope>NUCLEOTIDE SEQUENCE [LARGE SCALE GENOMIC DNA]</scope>
</reference>
<reference key="5">
    <citation type="submission" date="2005-09" db="EMBL/GenBank/DDBJ databases">
        <authorList>
            <person name="Mural R.J."/>
            <person name="Istrail S."/>
            <person name="Sutton G.G."/>
            <person name="Florea L."/>
            <person name="Halpern A.L."/>
            <person name="Mobarry C.M."/>
            <person name="Lippert R."/>
            <person name="Walenz B."/>
            <person name="Shatkay H."/>
            <person name="Dew I."/>
            <person name="Miller J.R."/>
            <person name="Flanigan M.J."/>
            <person name="Edwards N.J."/>
            <person name="Bolanos R."/>
            <person name="Fasulo D."/>
            <person name="Halldorsson B.V."/>
            <person name="Hannenhalli S."/>
            <person name="Turner R."/>
            <person name="Yooseph S."/>
            <person name="Lu F."/>
            <person name="Nusskern D.R."/>
            <person name="Shue B.C."/>
            <person name="Zheng X.H."/>
            <person name="Zhong F."/>
            <person name="Delcher A.L."/>
            <person name="Huson D.H."/>
            <person name="Kravitz S.A."/>
            <person name="Mouchard L."/>
            <person name="Reinert K."/>
            <person name="Remington K.A."/>
            <person name="Clark A.G."/>
            <person name="Waterman M.S."/>
            <person name="Eichler E.E."/>
            <person name="Adams M.D."/>
            <person name="Hunkapiller M.W."/>
            <person name="Myers E.W."/>
            <person name="Venter J.C."/>
        </authorList>
    </citation>
    <scope>NUCLEOTIDE SEQUENCE [LARGE SCALE GENOMIC DNA]</scope>
</reference>
<reference key="6">
    <citation type="journal article" date="2004" name="Genome Res.">
        <title>The status, quality, and expansion of the NIH full-length cDNA project: the Mammalian Gene Collection (MGC).</title>
        <authorList>
            <consortium name="The MGC Project Team"/>
        </authorList>
    </citation>
    <scope>NUCLEOTIDE SEQUENCE [LARGE SCALE MRNA] (ISOFORMS 1 AND 4)</scope>
    <scope>VARIANT THR-395</scope>
    <source>
        <tissue>Kidney</tissue>
        <tissue>Muscle</tissue>
    </source>
</reference>
<reference key="7">
    <citation type="journal article" date="2002" name="Science">
        <title>The protein kinase complement of the human genome.</title>
        <authorList>
            <person name="Manning G."/>
            <person name="Whyte D.B."/>
            <person name="Martinez R."/>
            <person name="Hunter T."/>
            <person name="Sudarsanam S."/>
        </authorList>
    </citation>
    <scope>IDENTIFICATION</scope>
</reference>
<reference key="8">
    <citation type="journal article" date="2003" name="Biochem. Biophys. Res. Commun.">
        <title>Identification of a novel serine/threonine kinase that inhibits TNF-induced NF-kappaB activation and p53-induced transcription.</title>
        <authorList>
            <person name="Huang J."/>
            <person name="Teng L."/>
            <person name="Liu T."/>
            <person name="Li L."/>
            <person name="Chen D."/>
            <person name="Li F."/>
            <person name="Xu L.-G."/>
            <person name="Zhai Z."/>
            <person name="Shu H.-B."/>
        </authorList>
    </citation>
    <scope>FUNCTION</scope>
    <scope>SUBCELLULAR LOCATION</scope>
    <scope>TISSUE SPECIFICITY</scope>
</reference>
<reference key="9">
    <citation type="journal article" date="2007" name="Nature">
        <title>Patterns of somatic mutation in human cancer genomes.</title>
        <authorList>
            <person name="Greenman C."/>
            <person name="Stephens P."/>
            <person name="Smith R."/>
            <person name="Dalgliesh G.L."/>
            <person name="Hunter C."/>
            <person name="Bignell G."/>
            <person name="Davies H."/>
            <person name="Teague J."/>
            <person name="Butler A."/>
            <person name="Stevens C."/>
            <person name="Edkins S."/>
            <person name="O'Meara S."/>
            <person name="Vastrik I."/>
            <person name="Schmidt E.E."/>
            <person name="Avis T."/>
            <person name="Barthorpe S."/>
            <person name="Bhamra G."/>
            <person name="Buck G."/>
            <person name="Choudhury B."/>
            <person name="Clements J."/>
            <person name="Cole J."/>
            <person name="Dicks E."/>
            <person name="Forbes S."/>
            <person name="Gray K."/>
            <person name="Halliday K."/>
            <person name="Harrison R."/>
            <person name="Hills K."/>
            <person name="Hinton J."/>
            <person name="Jenkinson A."/>
            <person name="Jones D."/>
            <person name="Menzies A."/>
            <person name="Mironenko T."/>
            <person name="Perry J."/>
            <person name="Raine K."/>
            <person name="Richardson D."/>
            <person name="Shepherd R."/>
            <person name="Small A."/>
            <person name="Tofts C."/>
            <person name="Varian J."/>
            <person name="Webb T."/>
            <person name="West S."/>
            <person name="Widaa S."/>
            <person name="Yates A."/>
            <person name="Cahill D.P."/>
            <person name="Louis D.N."/>
            <person name="Goldstraw P."/>
            <person name="Nicholson A.G."/>
            <person name="Brasseur F."/>
            <person name="Looijenga L."/>
            <person name="Weber B.L."/>
            <person name="Chiew Y.-E."/>
            <person name="DeFazio A."/>
            <person name="Greaves M.F."/>
            <person name="Green A.R."/>
            <person name="Campbell P."/>
            <person name="Birney E."/>
            <person name="Easton D.F."/>
            <person name="Chenevix-Trench G."/>
            <person name="Tan M.-H."/>
            <person name="Khoo S.K."/>
            <person name="Teh B.T."/>
            <person name="Yuen S.T."/>
            <person name="Leung S.Y."/>
            <person name="Wooster R."/>
            <person name="Futreal P.A."/>
            <person name="Stratton M.R."/>
        </authorList>
    </citation>
    <scope>VARIANTS [LARGE SCALE ANALYSIS] VAL-10; THR-133; GLN-211 AND THR-395</scope>
</reference>
<proteinExistence type="evidence at protein level"/>
<protein>
    <recommendedName>
        <fullName>Serine/threonine-protein kinase 40</fullName>
        <ecNumber>2.7.11.1</ecNumber>
    </recommendedName>
    <alternativeName>
        <fullName>SINK-homologous serine/threonine-protein kinase</fullName>
    </alternativeName>
    <alternativeName>
        <fullName>Sugen kinase 495</fullName>
        <shortName>SgK495</shortName>
    </alternativeName>
</protein>
<evidence type="ECO:0000255" key="1">
    <source>
        <dbReference type="PROSITE-ProRule" id="PRU00159"/>
    </source>
</evidence>
<evidence type="ECO:0000255" key="2">
    <source>
        <dbReference type="PROSITE-ProRule" id="PRU10027"/>
    </source>
</evidence>
<evidence type="ECO:0000256" key="3">
    <source>
        <dbReference type="SAM" id="MobiDB-lite"/>
    </source>
</evidence>
<evidence type="ECO:0000269" key="4">
    <source>
    </source>
</evidence>
<evidence type="ECO:0000269" key="5">
    <source>
    </source>
</evidence>
<evidence type="ECO:0000269" key="6">
    <source>
    </source>
</evidence>
<evidence type="ECO:0000269" key="7">
    <source>
    </source>
</evidence>
<evidence type="ECO:0000303" key="8">
    <source>
    </source>
</evidence>
<evidence type="ECO:0000303" key="9">
    <source>
    </source>
</evidence>
<evidence type="ECO:0000305" key="10"/>
<evidence type="ECO:0007829" key="11">
    <source>
        <dbReference type="PDB" id="5L2Q"/>
    </source>
</evidence>
<name>STK40_HUMAN</name>
<comment type="function">
    <text evidence="4">May be a negative regulator of NF-kappa-B and p53-mediated gene transcription.</text>
</comment>
<comment type="catalytic activity">
    <reaction>
        <text>L-seryl-[protein] + ATP = O-phospho-L-seryl-[protein] + ADP + H(+)</text>
        <dbReference type="Rhea" id="RHEA:17989"/>
        <dbReference type="Rhea" id="RHEA-COMP:9863"/>
        <dbReference type="Rhea" id="RHEA-COMP:11604"/>
        <dbReference type="ChEBI" id="CHEBI:15378"/>
        <dbReference type="ChEBI" id="CHEBI:29999"/>
        <dbReference type="ChEBI" id="CHEBI:30616"/>
        <dbReference type="ChEBI" id="CHEBI:83421"/>
        <dbReference type="ChEBI" id="CHEBI:456216"/>
        <dbReference type="EC" id="2.7.11.1"/>
    </reaction>
</comment>
<comment type="catalytic activity">
    <reaction>
        <text>L-threonyl-[protein] + ATP = O-phospho-L-threonyl-[protein] + ADP + H(+)</text>
        <dbReference type="Rhea" id="RHEA:46608"/>
        <dbReference type="Rhea" id="RHEA-COMP:11060"/>
        <dbReference type="Rhea" id="RHEA-COMP:11605"/>
        <dbReference type="ChEBI" id="CHEBI:15378"/>
        <dbReference type="ChEBI" id="CHEBI:30013"/>
        <dbReference type="ChEBI" id="CHEBI:30616"/>
        <dbReference type="ChEBI" id="CHEBI:61977"/>
        <dbReference type="ChEBI" id="CHEBI:456216"/>
        <dbReference type="EC" id="2.7.11.1"/>
    </reaction>
</comment>
<comment type="interaction">
    <interactant intactId="EBI-716112">
        <id>Q8N2I9</id>
    </interactant>
    <interactant intactId="EBI-1050793">
        <id>Q9GZT3</id>
        <label>SLIRP</label>
    </interactant>
    <organismsDiffer>false</organismsDiffer>
    <experiments>3</experiments>
</comment>
<comment type="interaction">
    <interactant intactId="EBI-716112">
        <id>Q8N2I9</id>
    </interactant>
    <interactant intactId="EBI-492555">
        <id>Q96RU8</id>
        <label>TRIB1</label>
    </interactant>
    <organismsDiffer>false</organismsDiffer>
    <experiments>6</experiments>
</comment>
<comment type="subcellular location">
    <subcellularLocation>
        <location evidence="4">Nucleus</location>
    </subcellularLocation>
    <subcellularLocation>
        <location evidence="4">Cytoplasm</location>
    </subcellularLocation>
</comment>
<comment type="alternative products">
    <event type="alternative splicing"/>
    <isoform>
        <id>Q8N2I9-1</id>
        <name>1</name>
        <sequence type="displayed"/>
    </isoform>
    <isoform>
        <id>Q8N2I9-2</id>
        <name>2</name>
        <sequence type="described" ref="VSP_020896 VSP_020898"/>
    </isoform>
    <isoform>
        <id>Q8N2I9-3</id>
        <name>3</name>
        <sequence type="described" ref="VSP_020899 VSP_020900"/>
    </isoform>
    <isoform>
        <id>Q8N2I9-4</id>
        <name>4</name>
        <sequence type="described" ref="VSP_020897"/>
    </isoform>
</comment>
<comment type="tissue specificity">
    <text evidence="4">Strongly expressed in heart, brain, placenta, lung, skeletal muscle, kidney, spleen, thymus, prostate, liver, pancreas, testis, ovary, small intestine, colon and peripheral blood leukocytes.</text>
</comment>
<comment type="similarity">
    <text evidence="10">Belongs to the protein kinase superfamily. CAMK Ser/Thr protein kinase family.</text>
</comment>
<comment type="sequence caution" evidence="10">
    <conflict type="erroneous initiation">
        <sequence resource="EMBL-CDS" id="AAH08344"/>
    </conflict>
</comment>
<comment type="sequence caution" evidence="10">
    <conflict type="erroneous initiation">
        <sequence resource="EMBL-CDS" id="BAB15794"/>
    </conflict>
</comment>
<comment type="sequence caution" evidence="10">
    <conflict type="erroneous initiation">
        <sequence resource="EMBL-CDS" id="BAC11361"/>
    </conflict>
</comment>
<dbReference type="EC" id="2.7.11.1"/>
<dbReference type="EMBL" id="AY198395">
    <property type="protein sequence ID" value="AAP20040.1"/>
    <property type="molecule type" value="mRNA"/>
</dbReference>
<dbReference type="EMBL" id="AK024504">
    <property type="protein sequence ID" value="BAB15794.1"/>
    <property type="status" value="ALT_INIT"/>
    <property type="molecule type" value="mRNA"/>
</dbReference>
<dbReference type="EMBL" id="AK075029">
    <property type="protein sequence ID" value="BAC11361.1"/>
    <property type="status" value="ALT_INIT"/>
    <property type="molecule type" value="mRNA"/>
</dbReference>
<dbReference type="EMBL" id="AK075048">
    <property type="protein sequence ID" value="BAC11371.1"/>
    <property type="molecule type" value="mRNA"/>
</dbReference>
<dbReference type="EMBL" id="AK131560">
    <property type="protein sequence ID" value="BAD18694.1"/>
    <property type="molecule type" value="mRNA"/>
</dbReference>
<dbReference type="EMBL" id="AL834137">
    <property type="protein sequence ID" value="CAD38852.1"/>
    <property type="molecule type" value="mRNA"/>
</dbReference>
<dbReference type="EMBL" id="AL591845">
    <property type="status" value="NOT_ANNOTATED_CDS"/>
    <property type="molecule type" value="Genomic_DNA"/>
</dbReference>
<dbReference type="EMBL" id="CH471059">
    <property type="protein sequence ID" value="EAX07371.1"/>
    <property type="molecule type" value="Genomic_DNA"/>
</dbReference>
<dbReference type="EMBL" id="CH471059">
    <property type="protein sequence ID" value="EAX07373.1"/>
    <property type="molecule type" value="Genomic_DNA"/>
</dbReference>
<dbReference type="EMBL" id="BC005169">
    <property type="protein sequence ID" value="AAH05169.3"/>
    <property type="molecule type" value="mRNA"/>
</dbReference>
<dbReference type="EMBL" id="BC007835">
    <property type="protein sequence ID" value="AAH07835.2"/>
    <property type="molecule type" value="mRNA"/>
</dbReference>
<dbReference type="EMBL" id="BC008344">
    <property type="protein sequence ID" value="AAH08344.1"/>
    <property type="status" value="ALT_INIT"/>
    <property type="molecule type" value="mRNA"/>
</dbReference>
<dbReference type="CCDS" id="CCDS407.1">
    <molecule id="Q8N2I9-1"/>
</dbReference>
<dbReference type="CCDS" id="CCDS60089.1">
    <molecule id="Q8N2I9-4"/>
</dbReference>
<dbReference type="RefSeq" id="NP_001269475.1">
    <molecule id="Q8N2I9-4"/>
    <property type="nucleotide sequence ID" value="NM_001282546.2"/>
</dbReference>
<dbReference type="RefSeq" id="NP_001269476.1">
    <molecule id="Q8N2I9-1"/>
    <property type="nucleotide sequence ID" value="NM_001282547.2"/>
</dbReference>
<dbReference type="RefSeq" id="NP_114406.1">
    <molecule id="Q8N2I9-1"/>
    <property type="nucleotide sequence ID" value="NM_032017.3"/>
</dbReference>
<dbReference type="PDB" id="5L2Q">
    <property type="method" value="X-ray"/>
    <property type="resolution" value="2.53 A"/>
    <property type="chains" value="A/B/C/D=22-339"/>
</dbReference>
<dbReference type="PDBsum" id="5L2Q"/>
<dbReference type="SMR" id="Q8N2I9"/>
<dbReference type="BioGRID" id="123816">
    <property type="interactions" value="58"/>
</dbReference>
<dbReference type="FunCoup" id="Q8N2I9">
    <property type="interactions" value="2443"/>
</dbReference>
<dbReference type="IntAct" id="Q8N2I9">
    <property type="interactions" value="31"/>
</dbReference>
<dbReference type="MINT" id="Q8N2I9"/>
<dbReference type="STRING" id="9606.ENSP00000362222"/>
<dbReference type="iPTMnet" id="Q8N2I9"/>
<dbReference type="PhosphoSitePlus" id="Q8N2I9"/>
<dbReference type="BioMuta" id="STK40"/>
<dbReference type="DMDM" id="116256080"/>
<dbReference type="jPOST" id="Q8N2I9"/>
<dbReference type="MassIVE" id="Q8N2I9"/>
<dbReference type="PaxDb" id="9606-ENSP00000362222"/>
<dbReference type="PeptideAtlas" id="Q8N2I9"/>
<dbReference type="ProteomicsDB" id="71707">
    <molecule id="Q8N2I9-1"/>
</dbReference>
<dbReference type="ProteomicsDB" id="71709">
    <molecule id="Q8N2I9-3"/>
</dbReference>
<dbReference type="ProteomicsDB" id="71710">
    <molecule id="Q8N2I9-4"/>
</dbReference>
<dbReference type="Pumba" id="Q8N2I9"/>
<dbReference type="Antibodypedia" id="2156">
    <property type="antibodies" value="150 antibodies from 29 providers"/>
</dbReference>
<dbReference type="DNASU" id="83931"/>
<dbReference type="Ensembl" id="ENST00000359297.6">
    <molecule id="Q8N2I9-3"/>
    <property type="protein sequence ID" value="ENSP00000352245.2"/>
    <property type="gene ID" value="ENSG00000196182.11"/>
</dbReference>
<dbReference type="Ensembl" id="ENST00000373129.7">
    <molecule id="Q8N2I9-1"/>
    <property type="protein sequence ID" value="ENSP00000362221.3"/>
    <property type="gene ID" value="ENSG00000196182.11"/>
</dbReference>
<dbReference type="Ensembl" id="ENST00000373130.7">
    <molecule id="Q8N2I9-4"/>
    <property type="protein sequence ID" value="ENSP00000362222.3"/>
    <property type="gene ID" value="ENSG00000196182.11"/>
</dbReference>
<dbReference type="Ensembl" id="ENST00000373132.4">
    <molecule id="Q8N2I9-1"/>
    <property type="protein sequence ID" value="ENSP00000362224.4"/>
    <property type="gene ID" value="ENSG00000196182.11"/>
</dbReference>
<dbReference type="GeneID" id="83931"/>
<dbReference type="KEGG" id="hsa:83931"/>
<dbReference type="MANE-Select" id="ENST00000373132.4">
    <property type="protein sequence ID" value="ENSP00000362224.4"/>
    <property type="RefSeq nucleotide sequence ID" value="NM_001282547.2"/>
    <property type="RefSeq protein sequence ID" value="NP_001269476.1"/>
</dbReference>
<dbReference type="UCSC" id="uc001cak.3">
    <molecule id="Q8N2I9-1"/>
    <property type="organism name" value="human"/>
</dbReference>
<dbReference type="AGR" id="HGNC:21373"/>
<dbReference type="CTD" id="83931"/>
<dbReference type="DisGeNET" id="83931"/>
<dbReference type="GeneCards" id="STK40"/>
<dbReference type="HGNC" id="HGNC:21373">
    <property type="gene designation" value="STK40"/>
</dbReference>
<dbReference type="HPA" id="ENSG00000196182">
    <property type="expression patterns" value="Low tissue specificity"/>
</dbReference>
<dbReference type="MIM" id="609437">
    <property type="type" value="gene"/>
</dbReference>
<dbReference type="neXtProt" id="NX_Q8N2I9"/>
<dbReference type="OpenTargets" id="ENSG00000196182"/>
<dbReference type="PharmGKB" id="PA142670860"/>
<dbReference type="VEuPathDB" id="HostDB:ENSG00000196182"/>
<dbReference type="eggNOG" id="KOG0583">
    <property type="taxonomic scope" value="Eukaryota"/>
</dbReference>
<dbReference type="GeneTree" id="ENSGT00950000182986"/>
<dbReference type="HOGENOM" id="CLU_035107_0_0_1"/>
<dbReference type="InParanoid" id="Q8N2I9"/>
<dbReference type="OMA" id="HGIFKDR"/>
<dbReference type="OrthoDB" id="410920at2759"/>
<dbReference type="PAN-GO" id="Q8N2I9">
    <property type="GO annotations" value="0 GO annotations based on evolutionary models"/>
</dbReference>
<dbReference type="PhylomeDB" id="Q8N2I9"/>
<dbReference type="TreeFam" id="TF329785"/>
<dbReference type="PathwayCommons" id="Q8N2I9"/>
<dbReference type="SignaLink" id="Q8N2I9"/>
<dbReference type="SIGNOR" id="Q8N2I9"/>
<dbReference type="BioGRID-ORCS" id="83931">
    <property type="hits" value="53 hits in 1213 CRISPR screens"/>
</dbReference>
<dbReference type="ChiTaRS" id="STK40">
    <property type="organism name" value="human"/>
</dbReference>
<dbReference type="GeneWiki" id="STK40"/>
<dbReference type="GenomeRNAi" id="83931"/>
<dbReference type="Pharos" id="Q8N2I9">
    <property type="development level" value="Tbio"/>
</dbReference>
<dbReference type="PRO" id="PR:Q8N2I9"/>
<dbReference type="Proteomes" id="UP000005640">
    <property type="component" value="Chromosome 1"/>
</dbReference>
<dbReference type="RNAct" id="Q8N2I9">
    <property type="molecule type" value="protein"/>
</dbReference>
<dbReference type="Bgee" id="ENSG00000196182">
    <property type="expression patterns" value="Expressed in gastrocnemius and 153 other cell types or tissues"/>
</dbReference>
<dbReference type="GO" id="GO:0005829">
    <property type="term" value="C:cytosol"/>
    <property type="evidence" value="ECO:0000314"/>
    <property type="project" value="HPA"/>
</dbReference>
<dbReference type="GO" id="GO:0005654">
    <property type="term" value="C:nucleoplasm"/>
    <property type="evidence" value="ECO:0000314"/>
    <property type="project" value="HPA"/>
</dbReference>
<dbReference type="GO" id="GO:0005524">
    <property type="term" value="F:ATP binding"/>
    <property type="evidence" value="ECO:0007669"/>
    <property type="project" value="UniProtKB-KW"/>
</dbReference>
<dbReference type="GO" id="GO:0106310">
    <property type="term" value="F:protein serine kinase activity"/>
    <property type="evidence" value="ECO:0007669"/>
    <property type="project" value="RHEA"/>
</dbReference>
<dbReference type="GO" id="GO:0004674">
    <property type="term" value="F:protein serine/threonine kinase activity"/>
    <property type="evidence" value="ECO:0007669"/>
    <property type="project" value="UniProtKB-KW"/>
</dbReference>
<dbReference type="GO" id="GO:0005977">
    <property type="term" value="P:glycogen metabolic process"/>
    <property type="evidence" value="ECO:0007669"/>
    <property type="project" value="Ensembl"/>
</dbReference>
<dbReference type="GO" id="GO:0048286">
    <property type="term" value="P:lung alveolus development"/>
    <property type="evidence" value="ECO:0007669"/>
    <property type="project" value="Ensembl"/>
</dbReference>
<dbReference type="GO" id="GO:0060425">
    <property type="term" value="P:lung morphogenesis"/>
    <property type="evidence" value="ECO:0007669"/>
    <property type="project" value="Ensembl"/>
</dbReference>
<dbReference type="GO" id="GO:0035264">
    <property type="term" value="P:multicellular organism growth"/>
    <property type="evidence" value="ECO:0007669"/>
    <property type="project" value="Ensembl"/>
</dbReference>
<dbReference type="GO" id="GO:0043066">
    <property type="term" value="P:negative regulation of apoptotic process"/>
    <property type="evidence" value="ECO:0007669"/>
    <property type="project" value="Ensembl"/>
</dbReference>
<dbReference type="GO" id="GO:0010468">
    <property type="term" value="P:regulation of gene expression"/>
    <property type="evidence" value="ECO:0007669"/>
    <property type="project" value="Ensembl"/>
</dbReference>
<dbReference type="GO" id="GO:0043408">
    <property type="term" value="P:regulation of MAPK cascade"/>
    <property type="evidence" value="ECO:0000318"/>
    <property type="project" value="GO_Central"/>
</dbReference>
<dbReference type="GO" id="GO:0003016">
    <property type="term" value="P:respiratory system process"/>
    <property type="evidence" value="ECO:0007669"/>
    <property type="project" value="Ensembl"/>
</dbReference>
<dbReference type="CDD" id="cd13974">
    <property type="entry name" value="STKc_SHIK"/>
    <property type="match status" value="1"/>
</dbReference>
<dbReference type="FunFam" id="1.10.510.10:FF:000269">
    <property type="entry name" value="Serine/threonine-protein kinase 40"/>
    <property type="match status" value="1"/>
</dbReference>
<dbReference type="Gene3D" id="1.10.510.10">
    <property type="entry name" value="Transferase(Phosphotransferase) domain 1"/>
    <property type="match status" value="1"/>
</dbReference>
<dbReference type="InterPro" id="IPR011009">
    <property type="entry name" value="Kinase-like_dom_sf"/>
</dbReference>
<dbReference type="InterPro" id="IPR000719">
    <property type="entry name" value="Prot_kinase_dom"/>
</dbReference>
<dbReference type="InterPro" id="IPR024236">
    <property type="entry name" value="Ser/Thr_kinase_40"/>
</dbReference>
<dbReference type="InterPro" id="IPR008271">
    <property type="entry name" value="Ser/Thr_kinase_AS"/>
</dbReference>
<dbReference type="InterPro" id="IPR024104">
    <property type="entry name" value="Tribbles/Ser_Thr_kinase_40"/>
</dbReference>
<dbReference type="PANTHER" id="PTHR22961">
    <property type="entry name" value="SER/THR PROTEIN KINASE-TRB"/>
    <property type="match status" value="1"/>
</dbReference>
<dbReference type="PANTHER" id="PTHR22961:SF16">
    <property type="entry name" value="SERINE_THREONINE-PROTEIN KINASE 40"/>
    <property type="match status" value="1"/>
</dbReference>
<dbReference type="Pfam" id="PF00069">
    <property type="entry name" value="Pkinase"/>
    <property type="match status" value="1"/>
</dbReference>
<dbReference type="SMART" id="SM00220">
    <property type="entry name" value="S_TKc"/>
    <property type="match status" value="1"/>
</dbReference>
<dbReference type="SUPFAM" id="SSF56112">
    <property type="entry name" value="Protein kinase-like (PK-like)"/>
    <property type="match status" value="1"/>
</dbReference>
<dbReference type="PROSITE" id="PS50011">
    <property type="entry name" value="PROTEIN_KINASE_DOM"/>
    <property type="match status" value="1"/>
</dbReference>
<dbReference type="PROSITE" id="PS00108">
    <property type="entry name" value="PROTEIN_KINASE_ST"/>
    <property type="match status" value="1"/>
</dbReference>
<feature type="chain" id="PRO_0000252261" description="Serine/threonine-protein kinase 40">
    <location>
        <begin position="1"/>
        <end position="435"/>
    </location>
</feature>
<feature type="domain" description="Protein kinase" evidence="1">
    <location>
        <begin position="35"/>
        <end position="331"/>
    </location>
</feature>
<feature type="region of interest" description="Disordered" evidence="3">
    <location>
        <begin position="1"/>
        <end position="25"/>
    </location>
</feature>
<feature type="compositionally biased region" description="Basic and acidic residues" evidence="3">
    <location>
        <begin position="1"/>
        <end position="10"/>
    </location>
</feature>
<feature type="active site" description="Proton acceptor" evidence="1 2">
    <location>
        <position position="196"/>
    </location>
</feature>
<feature type="binding site" evidence="1">
    <location>
        <begin position="41"/>
        <end position="49"/>
    </location>
    <ligand>
        <name>ATP</name>
        <dbReference type="ChEBI" id="CHEBI:30616"/>
    </ligand>
</feature>
<feature type="binding site" evidence="1">
    <location>
        <position position="66"/>
    </location>
    <ligand>
        <name>ATP</name>
        <dbReference type="ChEBI" id="CHEBI:30616"/>
    </ligand>
</feature>
<feature type="splice variant" id="VSP_020896" description="In isoform 2." evidence="8">
    <location>
        <begin position="1"/>
        <end position="262"/>
    </location>
</feature>
<feature type="splice variant" id="VSP_020897" description="In isoform 4." evidence="9">
    <original>L</original>
    <variation>LALCAV</variation>
    <location>
        <position position="37"/>
    </location>
</feature>
<feature type="splice variant" id="VSP_020898" description="In isoform 2." evidence="8">
    <original>VLFTMLYGQFPFYDSIPQELFRKIKAAEYTIPE</original>
    <variation>MGLRQGNGTVSLGILATDPAPPTEPSSPTPCLR</variation>
    <location>
        <begin position="263"/>
        <end position="295"/>
    </location>
</feature>
<feature type="splice variant" id="VSP_020899" description="In isoform 3." evidence="8">
    <original>AKVTEECSQYEFENYMRQQLLLAEEKSSIHDARSWVPKRQFGSAPPVRRLGHDA</original>
    <variation>VSWGGQMGHYPAPRDRLLGAGRARAEVAATRRPQSFLGLLPQPWGGKGRLQSSA</variation>
    <location>
        <begin position="364"/>
        <end position="417"/>
    </location>
</feature>
<feature type="splice variant" id="VSP_020900" description="In isoform 3." evidence="8">
    <location>
        <begin position="418"/>
        <end position="435"/>
    </location>
</feature>
<feature type="sequence variant" id="VAR_041200" description="In dbSNP:rs56314546." evidence="7">
    <original>A</original>
    <variation>V</variation>
    <location>
        <position position="10"/>
    </location>
</feature>
<feature type="sequence variant" id="VAR_041201" description="In a colorectal adenocarcinoma sample; somatic mutation; dbSNP:rs755089893." evidence="7">
    <original>M</original>
    <variation>T</variation>
    <location>
        <position position="133"/>
    </location>
</feature>
<feature type="sequence variant" id="VAR_041202" description="In a colorectal adenocarcinoma sample; somatic mutation; dbSNP:rs539738963." evidence="7">
    <original>R</original>
    <variation>Q</variation>
    <location>
        <position position="211"/>
    </location>
</feature>
<feature type="sequence variant" id="VAR_041203" description="In dbSNP:rs3795498." evidence="5 6 7">
    <original>A</original>
    <variation>T</variation>
    <location>
        <position position="395"/>
    </location>
</feature>
<feature type="sequence conflict" description="In Ref. 2; BAC11371." evidence="10" ref="2">
    <location>
        <position position="191"/>
    </location>
</feature>
<feature type="sequence conflict" description="In Ref. 6; AAH05169." evidence="10" ref="6">
    <original>E</original>
    <variation>Q</variation>
    <location>
        <position position="363"/>
    </location>
</feature>
<feature type="strand" evidence="11">
    <location>
        <begin position="49"/>
        <end position="52"/>
    </location>
</feature>
<feature type="turn" evidence="11">
    <location>
        <begin position="57"/>
        <end position="59"/>
    </location>
</feature>
<feature type="strand" evidence="11">
    <location>
        <begin position="64"/>
        <end position="69"/>
    </location>
</feature>
<feature type="helix" evidence="11">
    <location>
        <begin position="81"/>
        <end position="97"/>
    </location>
</feature>
<feature type="helix" evidence="11">
    <location>
        <begin position="98"/>
        <end position="100"/>
    </location>
</feature>
<feature type="strand" evidence="11">
    <location>
        <begin position="109"/>
        <end position="115"/>
    </location>
</feature>
<feature type="strand" evidence="11">
    <location>
        <begin position="124"/>
        <end position="126"/>
    </location>
</feature>
<feature type="strand" evidence="11">
    <location>
        <begin position="128"/>
        <end position="130"/>
    </location>
</feature>
<feature type="strand" evidence="11">
    <location>
        <begin position="136"/>
        <end position="141"/>
    </location>
</feature>
<feature type="helix" evidence="11">
    <location>
        <begin position="152"/>
        <end position="155"/>
    </location>
</feature>
<feature type="helix" evidence="11">
    <location>
        <begin position="159"/>
        <end position="164"/>
    </location>
</feature>
<feature type="strand" evidence="11">
    <location>
        <begin position="165"/>
        <end position="168"/>
    </location>
</feature>
<feature type="helix" evidence="11">
    <location>
        <begin position="171"/>
        <end position="190"/>
    </location>
</feature>
<feature type="helix" evidence="11">
    <location>
        <begin position="200"/>
        <end position="202"/>
    </location>
</feature>
<feature type="strand" evidence="11">
    <location>
        <begin position="203"/>
        <end position="205"/>
    </location>
</feature>
<feature type="turn" evidence="11">
    <location>
        <begin position="207"/>
        <end position="209"/>
    </location>
</feature>
<feature type="strand" evidence="11">
    <location>
        <begin position="212"/>
        <end position="214"/>
    </location>
</feature>
<feature type="turn" evidence="11">
    <location>
        <begin position="237"/>
        <end position="239"/>
    </location>
</feature>
<feature type="helix" evidence="11">
    <location>
        <begin position="242"/>
        <end position="245"/>
    </location>
</feature>
<feature type="helix" evidence="11">
    <location>
        <begin position="252"/>
        <end position="269"/>
    </location>
</feature>
<feature type="helix" evidence="11">
    <location>
        <begin position="279"/>
        <end position="288"/>
    </location>
</feature>
<feature type="helix" evidence="11">
    <location>
        <begin position="301"/>
        <end position="310"/>
    </location>
</feature>
<feature type="strand" evidence="11">
    <location>
        <begin position="315"/>
        <end position="318"/>
    </location>
</feature>
<feature type="helix" evidence="11">
    <location>
        <begin position="321"/>
        <end position="333"/>
    </location>
</feature>
<gene>
    <name type="primary">STK40</name>
    <name type="synonym">SGK495</name>
    <name type="synonym">SHIK</name>
</gene>